<accession>Q9I069</accession>
<keyword id="KW-1043">Host membrane</keyword>
<keyword id="KW-0472">Membrane</keyword>
<keyword id="KW-1185">Reference proteome</keyword>
<keyword id="KW-0964">Secreted</keyword>
<keyword id="KW-0812">Transmembrane</keyword>
<keyword id="KW-1133">Transmembrane helix</keyword>
<keyword id="KW-0843">Virulence</keyword>
<protein>
    <recommendedName>
        <fullName evidence="3">Toxin protein Tse4</fullName>
    </recommendedName>
</protein>
<organism>
    <name type="scientific">Pseudomonas aeruginosa (strain ATCC 15692 / DSM 22644 / CIP 104116 / JCM 14847 / LMG 12228 / 1C / PRS 101 / PAO1)</name>
    <dbReference type="NCBI Taxonomy" id="208964"/>
    <lineage>
        <taxon>Bacteria</taxon>
        <taxon>Pseudomonadati</taxon>
        <taxon>Pseudomonadota</taxon>
        <taxon>Gammaproteobacteria</taxon>
        <taxon>Pseudomonadales</taxon>
        <taxon>Pseudomonadaceae</taxon>
        <taxon>Pseudomonas</taxon>
    </lineage>
</organism>
<dbReference type="EMBL" id="AE004091">
    <property type="protein sequence ID" value="AAG06162.1"/>
    <property type="molecule type" value="Genomic_DNA"/>
</dbReference>
<dbReference type="PIR" id="E83298">
    <property type="entry name" value="E83298"/>
</dbReference>
<dbReference type="RefSeq" id="NP_251464.1">
    <property type="nucleotide sequence ID" value="NC_002516.2"/>
</dbReference>
<dbReference type="RefSeq" id="WP_003099160.1">
    <property type="nucleotide sequence ID" value="NZ_QZGE01000011.1"/>
</dbReference>
<dbReference type="STRING" id="208964.PA2774"/>
<dbReference type="PaxDb" id="208964-PA2774"/>
<dbReference type="GeneID" id="882745"/>
<dbReference type="KEGG" id="pae:PA2774"/>
<dbReference type="PATRIC" id="fig|208964.12.peg.2912"/>
<dbReference type="PseudoCAP" id="PA2774"/>
<dbReference type="HOGENOM" id="CLU_120465_0_0_6"/>
<dbReference type="InParanoid" id="Q9I069"/>
<dbReference type="OrthoDB" id="7017134at2"/>
<dbReference type="BioCyc" id="PAER208964:G1FZ6-2821-MONOMER"/>
<dbReference type="Proteomes" id="UP000002438">
    <property type="component" value="Chromosome"/>
</dbReference>
<dbReference type="GO" id="GO:0005576">
    <property type="term" value="C:extracellular region"/>
    <property type="evidence" value="ECO:0007669"/>
    <property type="project" value="UniProtKB-SubCell"/>
</dbReference>
<dbReference type="GO" id="GO:0033644">
    <property type="term" value="C:host cell membrane"/>
    <property type="evidence" value="ECO:0007669"/>
    <property type="project" value="UniProtKB-SubCell"/>
</dbReference>
<dbReference type="GO" id="GO:0016020">
    <property type="term" value="C:membrane"/>
    <property type="evidence" value="ECO:0007669"/>
    <property type="project" value="UniProtKB-KW"/>
</dbReference>
<proteinExistence type="predicted"/>
<sequence>MSQLPIPLPLNESRWRYVTASGGGMTVAFLAGSGGSITLLSPEGENVSFRYGGVGGGIGLGMRLPRFGKVNLNVKGKSVGGAGALEALPSTGTVLVADGLVGRDLSRGDFTGPCMYVELGAGVIAGGSGTAILFGLDPKLLAAVALASASPLTAALGASMSRQLLQSSRGALLMAGVNVGAQFGGGAAAYLGALF</sequence>
<evidence type="ECO:0000255" key="1"/>
<evidence type="ECO:0000269" key="2">
    <source>
    </source>
</evidence>
<evidence type="ECO:0000303" key="3">
    <source>
    </source>
</evidence>
<name>TSE4_PSEAE</name>
<comment type="function">
    <text evidence="2">Toxin secreted by the H1 type VI (H1-T6SS) secretion system into the periplasm of recipient cells.</text>
</comment>
<comment type="subcellular location">
    <subcellularLocation>
        <location evidence="2">Host membrane</location>
    </subcellularLocation>
    <subcellularLocation>
        <location evidence="2">Secreted</location>
    </subcellularLocation>
    <text evidence="2">Delivered to the target cell periplasm by the H1 type VI (H1-T6SS) secretion system.</text>
</comment>
<comment type="disruption phenotype">
    <text evidence="2">Deletion mutant together with deletion of its cognate immunity protein Tsi4 leads to a significant loss of fitness advantage when placed in competition with parental strains.</text>
</comment>
<reference key="1">
    <citation type="journal article" date="2000" name="Nature">
        <title>Complete genome sequence of Pseudomonas aeruginosa PAO1, an opportunistic pathogen.</title>
        <authorList>
            <person name="Stover C.K."/>
            <person name="Pham X.-Q.T."/>
            <person name="Erwin A.L."/>
            <person name="Mizoguchi S.D."/>
            <person name="Warrener P."/>
            <person name="Hickey M.J."/>
            <person name="Brinkman F.S.L."/>
            <person name="Hufnagle W.O."/>
            <person name="Kowalik D.J."/>
            <person name="Lagrou M."/>
            <person name="Garber R.L."/>
            <person name="Goltry L."/>
            <person name="Tolentino E."/>
            <person name="Westbrock-Wadman S."/>
            <person name="Yuan Y."/>
            <person name="Brody L.L."/>
            <person name="Coulter S.N."/>
            <person name="Folger K.R."/>
            <person name="Kas A."/>
            <person name="Larbig K."/>
            <person name="Lim R.M."/>
            <person name="Smith K.A."/>
            <person name="Spencer D.H."/>
            <person name="Wong G.K.-S."/>
            <person name="Wu Z."/>
            <person name="Paulsen I.T."/>
            <person name="Reizer J."/>
            <person name="Saier M.H. Jr."/>
            <person name="Hancock R.E.W."/>
            <person name="Lory S."/>
            <person name="Olson M.V."/>
        </authorList>
    </citation>
    <scope>NUCLEOTIDE SEQUENCE [LARGE SCALE GENOMIC DNA]</scope>
    <source>
        <strain>ATCC 15692 / DSM 22644 / CIP 104116 / JCM 14847 / LMG 12228 / 1C / PRS 101 / PAO1</strain>
    </source>
</reference>
<reference key="2">
    <citation type="journal article" date="2014" name="Mol. Microbiol.">
        <title>Genetically distinct pathways guide effector export through the type VI secretion system.</title>
        <authorList>
            <person name="Whitney J.C."/>
            <person name="Beck C.M."/>
            <person name="Goo Y.A."/>
            <person name="Russell A.B."/>
            <person name="Harding B.N."/>
            <person name="De Leon J.A."/>
            <person name="Cunningham D.A."/>
            <person name="Tran B.Q."/>
            <person name="Low D.A."/>
            <person name="Goodlett D.R."/>
            <person name="Hayes C.S."/>
            <person name="Mougous J.D."/>
        </authorList>
    </citation>
    <scope>FUNCTION</scope>
    <scope>DISRUPTION PHENOTYPE</scope>
    <scope>SUBCELLULAR LOCATION</scope>
    <source>
        <strain>ATCC 15692 / DSM 22644 / CIP 104116 / JCM 14847 / LMG 12228 / 1C / PRS 101 / PAO1</strain>
    </source>
</reference>
<gene>
    <name evidence="3" type="primary">tse4</name>
    <name type="ordered locus">PA2774</name>
</gene>
<feature type="chain" id="PRO_0000449106" description="Toxin protein Tse4">
    <location>
        <begin position="1"/>
        <end position="195"/>
    </location>
</feature>
<feature type="transmembrane region" description="Helical" evidence="1">
    <location>
        <begin position="20"/>
        <end position="40"/>
    </location>
</feature>
<feature type="transmembrane region" description="Helical" evidence="1">
    <location>
        <begin position="116"/>
        <end position="136"/>
    </location>
</feature>
<feature type="transmembrane region" description="Helical" evidence="1">
    <location>
        <begin position="140"/>
        <end position="160"/>
    </location>
</feature>
<feature type="transmembrane region" description="Helical" evidence="1">
    <location>
        <begin position="171"/>
        <end position="191"/>
    </location>
</feature>